<keyword id="KW-1003">Cell membrane</keyword>
<keyword id="KW-0472">Membrane</keyword>
<keyword id="KW-1185">Reference proteome</keyword>
<keyword id="KW-0812">Transmembrane</keyword>
<keyword id="KW-1133">Transmembrane helix</keyword>
<protein>
    <recommendedName>
        <fullName>UPF0754 membrane protein SSP0953</fullName>
    </recommendedName>
</protein>
<comment type="subcellular location">
    <subcellularLocation>
        <location evidence="1">Cell membrane</location>
        <topology evidence="1">Multi-pass membrane protein</topology>
    </subcellularLocation>
</comment>
<comment type="similarity">
    <text evidence="3">Belongs to the UPF0754 family.</text>
</comment>
<evidence type="ECO:0000250" key="1"/>
<evidence type="ECO:0000255" key="2"/>
<evidence type="ECO:0000305" key="3"/>
<accession>Q49YN9</accession>
<feature type="chain" id="PRO_0000388322" description="UPF0754 membrane protein SSP0953">
    <location>
        <begin position="1"/>
        <end position="376"/>
    </location>
</feature>
<feature type="transmembrane region" description="Helical" evidence="2">
    <location>
        <begin position="4"/>
        <end position="24"/>
    </location>
</feature>
<feature type="transmembrane region" description="Helical" evidence="2">
    <location>
        <begin position="356"/>
        <end position="376"/>
    </location>
</feature>
<sequence length="376" mass="42911">MQTFLVIIFMMVIGALIGGVTNVIAVKMLFHPFKTYYIFKKRVPFTPGLIPNRRKEIADKIGQVVEEHLLTEEVIQAKLNAPTSRDAIEEIIFKQIAKLKENHTTIQSLADIVDIDFSKTANQKLDELISDKMDNFYLDYQNTPIQQLIPNDIESSIDDKVALLPELLFDRARVYLKSEKGGADIASMLDTFFNEKGKIVGMLQMFMTKESIAERIQHELIRLTSHPKAKAIATQIIENEYATMKSKQLNELINETQYQAFKTSVTELALRYVDLEQTSHKPLHTIMPRFISFLETKVSKTLTDVIIDNASKHLSPIMKKINLRQMVEEQINTFDLAYIEKLIIDIANKELKLIMFLGFLLGGIIGLFQGVIAIFV</sequence>
<name>Y953_STAS1</name>
<dbReference type="EMBL" id="AP008934">
    <property type="protein sequence ID" value="BAE18098.1"/>
    <property type="molecule type" value="Genomic_DNA"/>
</dbReference>
<dbReference type="RefSeq" id="WP_011302814.1">
    <property type="nucleotide sequence ID" value="NC_007350.1"/>
</dbReference>
<dbReference type="SMR" id="Q49YN9"/>
<dbReference type="DNASU" id="3616135"/>
<dbReference type="GeneID" id="3616135"/>
<dbReference type="KEGG" id="ssp:SSP0953"/>
<dbReference type="PATRIC" id="fig|342451.11.peg.954"/>
<dbReference type="eggNOG" id="COG4399">
    <property type="taxonomic scope" value="Bacteria"/>
</dbReference>
<dbReference type="HOGENOM" id="CLU_042384_0_0_9"/>
<dbReference type="OrthoDB" id="9787430at2"/>
<dbReference type="Proteomes" id="UP000006371">
    <property type="component" value="Chromosome"/>
</dbReference>
<dbReference type="GO" id="GO:0005886">
    <property type="term" value="C:plasma membrane"/>
    <property type="evidence" value="ECO:0007669"/>
    <property type="project" value="UniProtKB-SubCell"/>
</dbReference>
<dbReference type="InterPro" id="IPR007383">
    <property type="entry name" value="DUF445"/>
</dbReference>
<dbReference type="InterPro" id="IPR016991">
    <property type="entry name" value="UCP032178"/>
</dbReference>
<dbReference type="PANTHER" id="PTHR35791">
    <property type="entry name" value="UPF0754 MEMBRANE PROTEIN YHEB"/>
    <property type="match status" value="1"/>
</dbReference>
<dbReference type="PANTHER" id="PTHR35791:SF1">
    <property type="entry name" value="UPF0754 MEMBRANE PROTEIN YHEB"/>
    <property type="match status" value="1"/>
</dbReference>
<dbReference type="Pfam" id="PF04286">
    <property type="entry name" value="DUF445"/>
    <property type="match status" value="1"/>
</dbReference>
<dbReference type="PIRSF" id="PIRSF032178">
    <property type="entry name" value="UCP032178"/>
    <property type="match status" value="1"/>
</dbReference>
<proteinExistence type="inferred from homology"/>
<reference key="1">
    <citation type="journal article" date="2005" name="Proc. Natl. Acad. Sci. U.S.A.">
        <title>Whole genome sequence of Staphylococcus saprophyticus reveals the pathogenesis of uncomplicated urinary tract infection.</title>
        <authorList>
            <person name="Kuroda M."/>
            <person name="Yamashita A."/>
            <person name="Hirakawa H."/>
            <person name="Kumano M."/>
            <person name="Morikawa K."/>
            <person name="Higashide M."/>
            <person name="Maruyama A."/>
            <person name="Inose Y."/>
            <person name="Matoba K."/>
            <person name="Toh H."/>
            <person name="Kuhara S."/>
            <person name="Hattori M."/>
            <person name="Ohta T."/>
        </authorList>
    </citation>
    <scope>NUCLEOTIDE SEQUENCE [LARGE SCALE GENOMIC DNA]</scope>
    <source>
        <strain>ATCC 15305 / DSM 20229 / NCIMB 8711 / NCTC 7292 / S-41</strain>
    </source>
</reference>
<organism>
    <name type="scientific">Staphylococcus saprophyticus subsp. saprophyticus (strain ATCC 15305 / DSM 20229 / NCIMB 8711 / NCTC 7292 / S-41)</name>
    <dbReference type="NCBI Taxonomy" id="342451"/>
    <lineage>
        <taxon>Bacteria</taxon>
        <taxon>Bacillati</taxon>
        <taxon>Bacillota</taxon>
        <taxon>Bacilli</taxon>
        <taxon>Bacillales</taxon>
        <taxon>Staphylococcaceae</taxon>
        <taxon>Staphylococcus</taxon>
    </lineage>
</organism>
<gene>
    <name type="ordered locus">SSP0953</name>
</gene>